<organism>
    <name type="scientific">Gloeobacter violaceus (strain ATCC 29082 / PCC 7421)</name>
    <dbReference type="NCBI Taxonomy" id="251221"/>
    <lineage>
        <taxon>Bacteria</taxon>
        <taxon>Bacillati</taxon>
        <taxon>Cyanobacteriota</taxon>
        <taxon>Cyanophyceae</taxon>
        <taxon>Gloeobacterales</taxon>
        <taxon>Gloeobacteraceae</taxon>
        <taxon>Gloeobacter</taxon>
    </lineage>
</organism>
<protein>
    <recommendedName>
        <fullName evidence="1">Probable cytosol aminopeptidase</fullName>
        <ecNumber evidence="1">3.4.11.1</ecNumber>
    </recommendedName>
    <alternativeName>
        <fullName evidence="1">Leucine aminopeptidase</fullName>
        <shortName evidence="1">LAP</shortName>
        <ecNumber evidence="1">3.4.11.10</ecNumber>
    </alternativeName>
    <alternativeName>
        <fullName evidence="1">Leucyl aminopeptidase</fullName>
    </alternativeName>
</protein>
<comment type="function">
    <text evidence="1">Presumably involved in the processing and regular turnover of intracellular proteins. Catalyzes the removal of unsubstituted N-terminal amino acids from various peptides.</text>
</comment>
<comment type="catalytic activity">
    <reaction evidence="1">
        <text>Release of an N-terminal amino acid, Xaa-|-Yaa-, in which Xaa is preferably Leu, but may be other amino acids including Pro although not Arg or Lys, and Yaa may be Pro. Amino acid amides and methyl esters are also readily hydrolyzed, but rates on arylamides are exceedingly low.</text>
        <dbReference type="EC" id="3.4.11.1"/>
    </reaction>
</comment>
<comment type="catalytic activity">
    <reaction evidence="1">
        <text>Release of an N-terminal amino acid, preferentially leucine, but not glutamic or aspartic acids.</text>
        <dbReference type="EC" id="3.4.11.10"/>
    </reaction>
</comment>
<comment type="cofactor">
    <cofactor evidence="1">
        <name>Mn(2+)</name>
        <dbReference type="ChEBI" id="CHEBI:29035"/>
    </cofactor>
    <text evidence="1">Binds 2 manganese ions per subunit.</text>
</comment>
<comment type="subcellular location">
    <subcellularLocation>
        <location evidence="1">Cytoplasm</location>
    </subcellularLocation>
</comment>
<comment type="similarity">
    <text evidence="1">Belongs to the peptidase M17 family.</text>
</comment>
<evidence type="ECO:0000255" key="1">
    <source>
        <dbReference type="HAMAP-Rule" id="MF_00181"/>
    </source>
</evidence>
<feature type="chain" id="PRO_0000165756" description="Probable cytosol aminopeptidase">
    <location>
        <begin position="1"/>
        <end position="504"/>
    </location>
</feature>
<feature type="active site" evidence="1">
    <location>
        <position position="286"/>
    </location>
</feature>
<feature type="active site" evidence="1">
    <location>
        <position position="360"/>
    </location>
</feature>
<feature type="binding site" evidence="1">
    <location>
        <position position="274"/>
    </location>
    <ligand>
        <name>Mn(2+)</name>
        <dbReference type="ChEBI" id="CHEBI:29035"/>
        <label>2</label>
    </ligand>
</feature>
<feature type="binding site" evidence="1">
    <location>
        <position position="279"/>
    </location>
    <ligand>
        <name>Mn(2+)</name>
        <dbReference type="ChEBI" id="CHEBI:29035"/>
        <label>1</label>
    </ligand>
</feature>
<feature type="binding site" evidence="1">
    <location>
        <position position="279"/>
    </location>
    <ligand>
        <name>Mn(2+)</name>
        <dbReference type="ChEBI" id="CHEBI:29035"/>
        <label>2</label>
    </ligand>
</feature>
<feature type="binding site" evidence="1">
    <location>
        <position position="297"/>
    </location>
    <ligand>
        <name>Mn(2+)</name>
        <dbReference type="ChEBI" id="CHEBI:29035"/>
        <label>2</label>
    </ligand>
</feature>
<feature type="binding site" evidence="1">
    <location>
        <position position="356"/>
    </location>
    <ligand>
        <name>Mn(2+)</name>
        <dbReference type="ChEBI" id="CHEBI:29035"/>
        <label>1</label>
    </ligand>
</feature>
<feature type="binding site" evidence="1">
    <location>
        <position position="358"/>
    </location>
    <ligand>
        <name>Mn(2+)</name>
        <dbReference type="ChEBI" id="CHEBI:29035"/>
        <label>1</label>
    </ligand>
</feature>
<feature type="binding site" evidence="1">
    <location>
        <position position="358"/>
    </location>
    <ligand>
        <name>Mn(2+)</name>
        <dbReference type="ChEBI" id="CHEBI:29035"/>
        <label>2</label>
    </ligand>
</feature>
<sequence length="504" mass="53388">MEFEAVRISPGKYRGDALLVGLFQDGPEPALALAALDAAVAAVVLEVISEEEFKPKSRQKLTVRVGGDTGLRKVVLVGLGEQAKYKPESLRQCIGEGARTLKAIKATTAGVWVPPLGEGGEEATVEALVEAIRLALHEDRRFRSKKSDSEENGNSNNGGENKLTKVSLVVAGEGDYAAAVRRGNILAEGTIFARELVSAPANYVTSVTLAEQATAIAEANGLECEILEKEDCERLGMGAYLGVAQGTDLPPKFIHLTYKPAHSAPRKRIAIIGKGITFDSGGLSIKPAKGMELMKVDMGGAAAALGAAKVLGQLKPDIEVHFIVAATENMVSGHAIHPGDILTASNGKTIEVDNTDAEGRLTLADALVFSEKLGVDAIVDLATLTGACVVALGNDIAGLLTENEELARQIRAAGEASGEKFWQLPMEESYFEGMKSVVADMRNTGSREGGTITAALFLKQFVEKTPWVHLDIAGPVWTEKQKGYTNRGGTGFGVRTLVRFVLAQ</sequence>
<name>AMPA_GLOVI</name>
<proteinExistence type="inferred from homology"/>
<reference key="1">
    <citation type="journal article" date="2003" name="DNA Res.">
        <title>Complete genome structure of Gloeobacter violaceus PCC 7421, a cyanobacterium that lacks thylakoids.</title>
        <authorList>
            <person name="Nakamura Y."/>
            <person name="Kaneko T."/>
            <person name="Sato S."/>
            <person name="Mimuro M."/>
            <person name="Miyashita H."/>
            <person name="Tsuchiya T."/>
            <person name="Sasamoto S."/>
            <person name="Watanabe A."/>
            <person name="Kawashima K."/>
            <person name="Kishida Y."/>
            <person name="Kiyokawa C."/>
            <person name="Kohara M."/>
            <person name="Matsumoto M."/>
            <person name="Matsuno A."/>
            <person name="Nakazaki N."/>
            <person name="Shimpo S."/>
            <person name="Takeuchi C."/>
            <person name="Yamada M."/>
            <person name="Tabata S."/>
        </authorList>
    </citation>
    <scope>NUCLEOTIDE SEQUENCE [LARGE SCALE GENOMIC DNA]</scope>
    <source>
        <strain>ATCC 29082 / PCC 7421</strain>
    </source>
</reference>
<gene>
    <name evidence="1" type="primary">pepA</name>
    <name type="ordered locus">glr2611</name>
</gene>
<keyword id="KW-0031">Aminopeptidase</keyword>
<keyword id="KW-0963">Cytoplasm</keyword>
<keyword id="KW-0378">Hydrolase</keyword>
<keyword id="KW-0464">Manganese</keyword>
<keyword id="KW-0479">Metal-binding</keyword>
<keyword id="KW-0645">Protease</keyword>
<keyword id="KW-1185">Reference proteome</keyword>
<dbReference type="EC" id="3.4.11.1" evidence="1"/>
<dbReference type="EC" id="3.4.11.10" evidence="1"/>
<dbReference type="EMBL" id="BA000045">
    <property type="protein sequence ID" value="BAC90552.1"/>
    <property type="molecule type" value="Genomic_DNA"/>
</dbReference>
<dbReference type="RefSeq" id="NP_925557.1">
    <property type="nucleotide sequence ID" value="NC_005125.1"/>
</dbReference>
<dbReference type="RefSeq" id="WP_011142605.1">
    <property type="nucleotide sequence ID" value="NC_005125.1"/>
</dbReference>
<dbReference type="SMR" id="Q7NHC6"/>
<dbReference type="FunCoup" id="Q7NHC6">
    <property type="interactions" value="299"/>
</dbReference>
<dbReference type="STRING" id="251221.gene:10760111"/>
<dbReference type="EnsemblBacteria" id="BAC90552">
    <property type="protein sequence ID" value="BAC90552"/>
    <property type="gene ID" value="BAC90552"/>
</dbReference>
<dbReference type="KEGG" id="gvi:glr2611"/>
<dbReference type="PATRIC" id="fig|251221.4.peg.2651"/>
<dbReference type="eggNOG" id="COG0260">
    <property type="taxonomic scope" value="Bacteria"/>
</dbReference>
<dbReference type="HOGENOM" id="CLU_013734_5_1_3"/>
<dbReference type="InParanoid" id="Q7NHC6"/>
<dbReference type="OrthoDB" id="9809354at2"/>
<dbReference type="PhylomeDB" id="Q7NHC6"/>
<dbReference type="Proteomes" id="UP000000557">
    <property type="component" value="Chromosome"/>
</dbReference>
<dbReference type="GO" id="GO:0005737">
    <property type="term" value="C:cytoplasm"/>
    <property type="evidence" value="ECO:0000318"/>
    <property type="project" value="GO_Central"/>
</dbReference>
<dbReference type="GO" id="GO:0030145">
    <property type="term" value="F:manganese ion binding"/>
    <property type="evidence" value="ECO:0007669"/>
    <property type="project" value="UniProtKB-UniRule"/>
</dbReference>
<dbReference type="GO" id="GO:0070006">
    <property type="term" value="F:metalloaminopeptidase activity"/>
    <property type="evidence" value="ECO:0007669"/>
    <property type="project" value="InterPro"/>
</dbReference>
<dbReference type="GO" id="GO:0008233">
    <property type="term" value="F:peptidase activity"/>
    <property type="evidence" value="ECO:0000318"/>
    <property type="project" value="GO_Central"/>
</dbReference>
<dbReference type="GO" id="GO:0006508">
    <property type="term" value="P:proteolysis"/>
    <property type="evidence" value="ECO:0000318"/>
    <property type="project" value="GO_Central"/>
</dbReference>
<dbReference type="CDD" id="cd00433">
    <property type="entry name" value="Peptidase_M17"/>
    <property type="match status" value="1"/>
</dbReference>
<dbReference type="Gene3D" id="3.40.220.10">
    <property type="entry name" value="Leucine Aminopeptidase, subunit E, domain 1"/>
    <property type="match status" value="1"/>
</dbReference>
<dbReference type="Gene3D" id="3.40.630.10">
    <property type="entry name" value="Zn peptidases"/>
    <property type="match status" value="1"/>
</dbReference>
<dbReference type="HAMAP" id="MF_00181">
    <property type="entry name" value="Cytosol_peptidase_M17"/>
    <property type="match status" value="1"/>
</dbReference>
<dbReference type="InterPro" id="IPR011356">
    <property type="entry name" value="Leucine_aapep/pepB"/>
</dbReference>
<dbReference type="InterPro" id="IPR043472">
    <property type="entry name" value="Macro_dom-like"/>
</dbReference>
<dbReference type="InterPro" id="IPR000819">
    <property type="entry name" value="Peptidase_M17_C"/>
</dbReference>
<dbReference type="InterPro" id="IPR023042">
    <property type="entry name" value="Peptidase_M17_leu_NH2_pept"/>
</dbReference>
<dbReference type="InterPro" id="IPR008283">
    <property type="entry name" value="Peptidase_M17_N"/>
</dbReference>
<dbReference type="NCBIfam" id="NF002073">
    <property type="entry name" value="PRK00913.1-2"/>
    <property type="match status" value="1"/>
</dbReference>
<dbReference type="NCBIfam" id="NF002074">
    <property type="entry name" value="PRK00913.1-4"/>
    <property type="match status" value="1"/>
</dbReference>
<dbReference type="NCBIfam" id="NF002076">
    <property type="entry name" value="PRK00913.2-3"/>
    <property type="match status" value="1"/>
</dbReference>
<dbReference type="NCBIfam" id="NF002083">
    <property type="entry name" value="PRK00913.3-5"/>
    <property type="match status" value="1"/>
</dbReference>
<dbReference type="PANTHER" id="PTHR11963:SF23">
    <property type="entry name" value="CYTOSOL AMINOPEPTIDASE"/>
    <property type="match status" value="1"/>
</dbReference>
<dbReference type="PANTHER" id="PTHR11963">
    <property type="entry name" value="LEUCINE AMINOPEPTIDASE-RELATED"/>
    <property type="match status" value="1"/>
</dbReference>
<dbReference type="Pfam" id="PF00883">
    <property type="entry name" value="Peptidase_M17"/>
    <property type="match status" value="1"/>
</dbReference>
<dbReference type="Pfam" id="PF02789">
    <property type="entry name" value="Peptidase_M17_N"/>
    <property type="match status" value="1"/>
</dbReference>
<dbReference type="PRINTS" id="PR00481">
    <property type="entry name" value="LAMNOPPTDASE"/>
</dbReference>
<dbReference type="SUPFAM" id="SSF52949">
    <property type="entry name" value="Macro domain-like"/>
    <property type="match status" value="1"/>
</dbReference>
<dbReference type="SUPFAM" id="SSF53187">
    <property type="entry name" value="Zn-dependent exopeptidases"/>
    <property type="match status" value="1"/>
</dbReference>
<dbReference type="PROSITE" id="PS00631">
    <property type="entry name" value="CYTOSOL_AP"/>
    <property type="match status" value="1"/>
</dbReference>
<accession>Q7NHC6</accession>